<sequence length="453" mass="50057">MAQWDDFPDQQEDTDSCTESVKFDARSVTALLPPHPKNGPTLQERMKSYKTALITLYLIVFVVLVPIIGIVAAQLLKWETKNCTVGSVNADISPSPEGKGNGSEDEMRFREAVMERMSNMESRIQYLSDNEANLLDAKNFQNFSITTDQRFNDVLFQLNSLLSSIQEHENIIGDISKSLVGLNTTVLDLQFSIETLNGRVQENAFKQQEEMRKLEERIYNASAEIKSLDEKQVYLEQEIKGEMKLLNNITNDLRLKDWEHSQTLKNITLLQGPPGPPGEKGDRGPPGQNGIPGFPGLIGTPGLKGDRGISGLPGVRGFPGPMGKTGKPGLNGQKGQKGEKGSGSMQRQSNTVRLVGGSGPHEGRVEIFHEGQWGTVCDDRWELRGGLVVCRSLGYKGVQSVHKRAYFGKGTGPIWLNEVFCFGKESSIEECRIRQWGVRACSHDEDAGVTCTT</sequence>
<gene>
    <name type="primary">MSR1</name>
</gene>
<accession>P21758</accession>
<accession>A5PJV2</accession>
<reference key="1">
    <citation type="journal article" date="1990" name="Nature">
        <title>Type I macrophage scavenger receptor contains alpha-helical and collagen-like coiled coils.</title>
        <authorList>
            <person name="Kodama T."/>
            <person name="Freeman M."/>
            <person name="Rohrer L."/>
            <person name="Zabrecky J."/>
            <person name="Matsudaira P."/>
            <person name="Krieger M."/>
        </authorList>
    </citation>
    <scope>NUCLEOTIDE SEQUENCE [MRNA] (ISOFORM I)</scope>
    <scope>PARTIAL PROTEIN SEQUENCE</scope>
    <source>
        <tissue>Lung</tissue>
    </source>
</reference>
<reference key="2">
    <citation type="journal article" date="1990" name="Nature">
        <title>Coiled-coil fibrous domains mediate ligand binding by macrophage scavenger receptor type II.</title>
        <authorList>
            <person name="Rohrer L."/>
            <person name="Freeman M."/>
            <person name="Kodama T."/>
            <person name="Penman M."/>
            <person name="Krieger M."/>
        </authorList>
    </citation>
    <scope>NUCLEOTIDE SEQUENCE [MRNA] (ISOFORM II)</scope>
    <source>
        <tissue>Lung</tissue>
    </source>
</reference>
<reference key="3">
    <citation type="submission" date="2007-06" db="EMBL/GenBank/DDBJ databases">
        <authorList>
            <consortium name="NIH - Mammalian Gene Collection (MGC) project"/>
        </authorList>
    </citation>
    <scope>NUCLEOTIDE SEQUENCE [LARGE SCALE MRNA] (ISOFORM I)</scope>
    <source>
        <strain>Hereford</strain>
        <tissue>Fetal liver</tissue>
    </source>
</reference>
<organism>
    <name type="scientific">Bos taurus</name>
    <name type="common">Bovine</name>
    <dbReference type="NCBI Taxonomy" id="9913"/>
    <lineage>
        <taxon>Eukaryota</taxon>
        <taxon>Metazoa</taxon>
        <taxon>Chordata</taxon>
        <taxon>Craniata</taxon>
        <taxon>Vertebrata</taxon>
        <taxon>Euteleostomi</taxon>
        <taxon>Mammalia</taxon>
        <taxon>Eutheria</taxon>
        <taxon>Laurasiatheria</taxon>
        <taxon>Artiodactyla</taxon>
        <taxon>Ruminantia</taxon>
        <taxon>Pecora</taxon>
        <taxon>Bovidae</taxon>
        <taxon>Bovinae</taxon>
        <taxon>Bos</taxon>
    </lineage>
</organism>
<evidence type="ECO:0000250" key="1">
    <source>
        <dbReference type="UniProtKB" id="P21757"/>
    </source>
</evidence>
<evidence type="ECO:0000250" key="2">
    <source>
        <dbReference type="UniProtKB" id="P30204"/>
    </source>
</evidence>
<evidence type="ECO:0000255" key="3"/>
<evidence type="ECO:0000255" key="4">
    <source>
        <dbReference type="PROSITE-ProRule" id="PRU00196"/>
    </source>
</evidence>
<evidence type="ECO:0000256" key="5">
    <source>
        <dbReference type="SAM" id="MobiDB-lite"/>
    </source>
</evidence>
<evidence type="ECO:0000303" key="6">
    <source>
    </source>
</evidence>
<evidence type="ECO:0000305" key="7"/>
<feature type="chain" id="PRO_0000181626" description="Macrophage scavenger receptor types I and II">
    <location>
        <begin position="1"/>
        <end position="453"/>
    </location>
</feature>
<feature type="topological domain" description="Cytoplasmic" evidence="3">
    <location>
        <begin position="1"/>
        <end position="50"/>
    </location>
</feature>
<feature type="transmembrane region" description="Helical; Signal-anchor for type II membrane protein" evidence="3">
    <location>
        <begin position="51"/>
        <end position="76"/>
    </location>
</feature>
<feature type="topological domain" description="Extracellular" evidence="3">
    <location>
        <begin position="77"/>
        <end position="453"/>
    </location>
</feature>
<feature type="domain" description="Collagen-like">
    <location>
        <begin position="272"/>
        <end position="343"/>
    </location>
</feature>
<feature type="domain" description="SRCR" evidence="4">
    <location>
        <begin position="352"/>
        <end position="452"/>
    </location>
</feature>
<feature type="region of interest" description="Spacer" evidence="7">
    <location>
        <begin position="77"/>
        <end position="108"/>
    </location>
</feature>
<feature type="region of interest" description="Disordered" evidence="5">
    <location>
        <begin position="267"/>
        <end position="295"/>
    </location>
</feature>
<feature type="region of interest" description="Disordered" evidence="5">
    <location>
        <begin position="313"/>
        <end position="349"/>
    </location>
</feature>
<feature type="coiled-coil region" evidence="3">
    <location>
        <begin position="194"/>
        <end position="255"/>
    </location>
</feature>
<feature type="modified residue" description="Phosphoserine" evidence="2">
    <location>
        <position position="27"/>
    </location>
</feature>
<feature type="glycosylation site" description="N-linked (GlcNAc...) asparagine" evidence="3">
    <location>
        <position position="82"/>
    </location>
</feature>
<feature type="glycosylation site" description="N-linked (GlcNAc...) asparagine" evidence="3">
    <location>
        <position position="101"/>
    </location>
</feature>
<feature type="glycosylation site" description="N-linked (GlcNAc...) asparagine" evidence="3">
    <location>
        <position position="142"/>
    </location>
</feature>
<feature type="glycosylation site" description="N-linked (GlcNAc...) asparagine" evidence="3">
    <location>
        <position position="183"/>
    </location>
</feature>
<feature type="glycosylation site" description="N-linked (GlcNAc...) asparagine" evidence="3">
    <location>
        <position position="220"/>
    </location>
</feature>
<feature type="glycosylation site" description="N-linked (GlcNAc...) asparagine" evidence="3">
    <location>
        <position position="248"/>
    </location>
</feature>
<feature type="glycosylation site" description="N-linked (GlcNAc...) asparagine" evidence="3">
    <location>
        <position position="266"/>
    </location>
</feature>
<feature type="disulfide bond" evidence="4">
    <location>
        <begin position="377"/>
        <end position="441"/>
    </location>
</feature>
<feature type="disulfide bond" evidence="4">
    <location>
        <begin position="390"/>
        <end position="451"/>
    </location>
</feature>
<feature type="disulfide bond" evidence="4">
    <location>
        <begin position="421"/>
        <end position="431"/>
    </location>
</feature>
<feature type="splice variant" id="VSP_006227" description="In isoform II." evidence="6">
    <original>QS</original>
    <variation>PG</variation>
    <location>
        <begin position="348"/>
        <end position="349"/>
    </location>
</feature>
<feature type="splice variant" id="VSP_006228" description="In isoform II." evidence="6">
    <location>
        <begin position="350"/>
        <end position="453"/>
    </location>
</feature>
<comment type="function">
    <text evidence="1">Membrane glycoproteins implicated in the pathologic deposition of cholesterol in arterial walls during atherogenesis. Two types of receptor subunits exist. These receptors mediate the endocytosis of a diverse group of macromolecules, including modified low density lipoproteins (LDL).</text>
</comment>
<comment type="subunit">
    <text evidence="1 2">Homotrimer. Interacts with MYO18A.</text>
</comment>
<comment type="subcellular location">
    <subcellularLocation>
        <location>Membrane</location>
        <topology>Single-pass type II membrane protein</topology>
    </subcellularLocation>
</comment>
<comment type="alternative products">
    <event type="alternative splicing"/>
    <isoform>
        <id>P21758-1</id>
        <name>I</name>
        <sequence type="displayed"/>
    </isoform>
    <isoform>
        <id>P21758-2</id>
        <name>II</name>
        <sequence type="described" ref="VSP_006227 VSP_006228"/>
    </isoform>
</comment>
<dbReference type="EMBL" id="X51689">
    <property type="protein sequence ID" value="CAA35987.1"/>
    <property type="molecule type" value="mRNA"/>
</dbReference>
<dbReference type="EMBL" id="X54183">
    <property type="protein sequence ID" value="CAA38108.1"/>
    <property type="molecule type" value="mRNA"/>
</dbReference>
<dbReference type="EMBL" id="BC142250">
    <property type="protein sequence ID" value="AAI42251.1"/>
    <property type="molecule type" value="mRNA"/>
</dbReference>
<dbReference type="PIR" id="S08276">
    <property type="entry name" value="S08276"/>
</dbReference>
<dbReference type="PIR" id="S08278">
    <property type="entry name" value="S08278"/>
</dbReference>
<dbReference type="RefSeq" id="NP_001106711.1">
    <molecule id="P21758-1"/>
    <property type="nucleotide sequence ID" value="NM_001113240.1"/>
</dbReference>
<dbReference type="RefSeq" id="NP_776538.1">
    <molecule id="P21758-2"/>
    <property type="nucleotide sequence ID" value="NM_174113.2"/>
</dbReference>
<dbReference type="SMR" id="P21758"/>
<dbReference type="FunCoup" id="P21758">
    <property type="interactions" value="213"/>
</dbReference>
<dbReference type="STRING" id="9913.ENSBTAP00000003751"/>
<dbReference type="GlyCosmos" id="P21758">
    <property type="glycosylation" value="7 sites, No reported glycans"/>
</dbReference>
<dbReference type="GlyGen" id="P21758">
    <property type="glycosylation" value="7 sites"/>
</dbReference>
<dbReference type="PaxDb" id="9913-ENSBTAP00000003751"/>
<dbReference type="Ensembl" id="ENSBTAT00000003755.6">
    <molecule id="P21758-2"/>
    <property type="protein sequence ID" value="ENSBTAP00000003755.5"/>
    <property type="gene ID" value="ENSBTAG00000002885.7"/>
</dbReference>
<dbReference type="GeneID" id="281311"/>
<dbReference type="KEGG" id="bta:281311"/>
<dbReference type="CTD" id="4481"/>
<dbReference type="VEuPathDB" id="HostDB:ENSBTAG00000002885"/>
<dbReference type="eggNOG" id="ENOG502QUW0">
    <property type="taxonomic scope" value="Eukaryota"/>
</dbReference>
<dbReference type="GeneTree" id="ENSGT00950000183074"/>
<dbReference type="HOGENOM" id="CLU_041152_2_0_1"/>
<dbReference type="InParanoid" id="P21758"/>
<dbReference type="OMA" id="DDHWEIR"/>
<dbReference type="OrthoDB" id="536948at2759"/>
<dbReference type="TreeFam" id="TF330855"/>
<dbReference type="Proteomes" id="UP000009136">
    <property type="component" value="Chromosome 27"/>
</dbReference>
<dbReference type="Bgee" id="ENSBTAG00000002885">
    <property type="expression patterns" value="Expressed in omental fat pad and 105 other cell types or tissues"/>
</dbReference>
<dbReference type="GO" id="GO:0005581">
    <property type="term" value="C:collagen trimer"/>
    <property type="evidence" value="ECO:0007669"/>
    <property type="project" value="UniProtKB-KW"/>
</dbReference>
<dbReference type="GO" id="GO:0034362">
    <property type="term" value="C:low-density lipoprotein particle"/>
    <property type="evidence" value="ECO:0007669"/>
    <property type="project" value="UniProtKB-KW"/>
</dbReference>
<dbReference type="GO" id="GO:0005886">
    <property type="term" value="C:plasma membrane"/>
    <property type="evidence" value="ECO:0000318"/>
    <property type="project" value="GO_Central"/>
</dbReference>
<dbReference type="GO" id="GO:0019899">
    <property type="term" value="F:enzyme binding"/>
    <property type="evidence" value="ECO:0000353"/>
    <property type="project" value="CAFA"/>
</dbReference>
<dbReference type="GO" id="GO:0031072">
    <property type="term" value="F:heat shock protein binding"/>
    <property type="evidence" value="ECO:0000353"/>
    <property type="project" value="DisProt"/>
</dbReference>
<dbReference type="GO" id="GO:0030544">
    <property type="term" value="F:Hsp70 protein binding"/>
    <property type="evidence" value="ECO:0000353"/>
    <property type="project" value="CAFA"/>
</dbReference>
<dbReference type="GO" id="GO:0051879">
    <property type="term" value="F:Hsp90 protein binding"/>
    <property type="evidence" value="ECO:0000353"/>
    <property type="project" value="CAFA"/>
</dbReference>
<dbReference type="GO" id="GO:0042802">
    <property type="term" value="F:identical protein binding"/>
    <property type="evidence" value="ECO:0000315"/>
    <property type="project" value="CAFA"/>
</dbReference>
<dbReference type="GO" id="GO:0005044">
    <property type="term" value="F:scavenger receptor activity"/>
    <property type="evidence" value="ECO:0007669"/>
    <property type="project" value="InterPro"/>
</dbReference>
<dbReference type="GO" id="GO:0070207">
    <property type="term" value="P:protein homotrimerization"/>
    <property type="evidence" value="ECO:0000315"/>
    <property type="project" value="CAFA"/>
</dbReference>
<dbReference type="GO" id="GO:0006898">
    <property type="term" value="P:receptor-mediated endocytosis"/>
    <property type="evidence" value="ECO:0007669"/>
    <property type="project" value="InterPro"/>
</dbReference>
<dbReference type="DisProt" id="DP00246"/>
<dbReference type="FunFam" id="3.10.250.10:FF:000011">
    <property type="entry name" value="Scavenger receptor class A member 5"/>
    <property type="match status" value="1"/>
</dbReference>
<dbReference type="Gene3D" id="3.10.250.10">
    <property type="entry name" value="SRCR-like domain"/>
    <property type="match status" value="1"/>
</dbReference>
<dbReference type="InterPro" id="IPR008160">
    <property type="entry name" value="Collagen"/>
</dbReference>
<dbReference type="InterPro" id="IPR003543">
    <property type="entry name" value="SR-AI/II"/>
</dbReference>
<dbReference type="InterPro" id="IPR001190">
    <property type="entry name" value="SRCR"/>
</dbReference>
<dbReference type="InterPro" id="IPR036772">
    <property type="entry name" value="SRCR-like_dom_sf"/>
</dbReference>
<dbReference type="PANTHER" id="PTHR48071:SF16">
    <property type="entry name" value="MACROPHAGE SCAVENGER RECEPTOR TYPES I AND II"/>
    <property type="match status" value="1"/>
</dbReference>
<dbReference type="PANTHER" id="PTHR48071">
    <property type="entry name" value="SRCR DOMAIN-CONTAINING PROTEIN"/>
    <property type="match status" value="1"/>
</dbReference>
<dbReference type="Pfam" id="PF01391">
    <property type="entry name" value="Collagen"/>
    <property type="match status" value="2"/>
</dbReference>
<dbReference type="Pfam" id="PF03523">
    <property type="entry name" value="Macscav_rec"/>
    <property type="match status" value="1"/>
</dbReference>
<dbReference type="Pfam" id="PF00530">
    <property type="entry name" value="SRCR"/>
    <property type="match status" value="1"/>
</dbReference>
<dbReference type="PRINTS" id="PR01408">
    <property type="entry name" value="MACSCAVRCPTR"/>
</dbReference>
<dbReference type="PRINTS" id="PR00258">
    <property type="entry name" value="SPERACTRCPTR"/>
</dbReference>
<dbReference type="SMART" id="SM00202">
    <property type="entry name" value="SR"/>
    <property type="match status" value="1"/>
</dbReference>
<dbReference type="SUPFAM" id="SSF56487">
    <property type="entry name" value="SRCR-like"/>
    <property type="match status" value="1"/>
</dbReference>
<dbReference type="PROSITE" id="PS00420">
    <property type="entry name" value="SRCR_1"/>
    <property type="match status" value="1"/>
</dbReference>
<dbReference type="PROSITE" id="PS50287">
    <property type="entry name" value="SRCR_2"/>
    <property type="match status" value="1"/>
</dbReference>
<keyword id="KW-0025">Alternative splicing</keyword>
<keyword id="KW-0175">Coiled coil</keyword>
<keyword id="KW-0176">Collagen</keyword>
<keyword id="KW-0903">Direct protein sequencing</keyword>
<keyword id="KW-1015">Disulfide bond</keyword>
<keyword id="KW-0254">Endocytosis</keyword>
<keyword id="KW-0325">Glycoprotein</keyword>
<keyword id="KW-0427">LDL</keyword>
<keyword id="KW-0472">Membrane</keyword>
<keyword id="KW-0597">Phosphoprotein</keyword>
<keyword id="KW-0675">Receptor</keyword>
<keyword id="KW-1185">Reference proteome</keyword>
<keyword id="KW-0735">Signal-anchor</keyword>
<keyword id="KW-0812">Transmembrane</keyword>
<keyword id="KW-1133">Transmembrane helix</keyword>
<protein>
    <recommendedName>
        <fullName>Macrophage scavenger receptor types I and II</fullName>
    </recommendedName>
    <alternativeName>
        <fullName>Macrophage acetylated LDL receptor I and II</fullName>
    </alternativeName>
    <cdAntigenName>CD204</cdAntigenName>
</protein>
<name>MSRE_BOVIN</name>
<proteinExistence type="evidence at protein level"/>